<feature type="chain" id="PRO_0000130789" description="Large ribosomal subunit protein uL24">
    <location>
        <begin position="1"/>
        <end position="145"/>
    </location>
</feature>
<feature type="region of interest" description="Disordered" evidence="2">
    <location>
        <begin position="1"/>
        <end position="21"/>
    </location>
</feature>
<feature type="region of interest" description="Disordered" evidence="2">
    <location>
        <begin position="122"/>
        <end position="145"/>
    </location>
</feature>
<feature type="modified residue" description="Phosphothreonine" evidence="9">
    <location>
        <position position="139"/>
    </location>
</feature>
<feature type="cross-link" description="Glycyl lysine isopeptide (Lys-Gly) (interchain with G-Cter in SUMO2)" evidence="1">
    <location>
        <position position="136"/>
    </location>
</feature>
<protein>
    <recommendedName>
        <fullName evidence="6">Large ribosomal subunit protein uL24</fullName>
    </recommendedName>
    <alternativeName>
        <fullName>60S ribosomal protein L26</fullName>
    </alternativeName>
    <alternativeName>
        <fullName>Silica-induced gene 20 protein</fullName>
        <shortName>SIG-20</shortName>
    </alternativeName>
</protein>
<accession>P61255</accession>
<accession>Q02877</accession>
<reference key="1">
    <citation type="journal article" date="1995" name="J. Immunol.">
        <title>Isolation of nine gene sequences induced by silica in murine macrophages.</title>
        <authorList>
            <person name="Segade F."/>
            <person name="Claudio E."/>
            <person name="Wrobel K."/>
            <person name="Ramos S."/>
            <person name="Lazo P.S."/>
        </authorList>
    </citation>
    <scope>NUCLEOTIDE SEQUENCE [MRNA]</scope>
    <scope>INDUCTION</scope>
    <source>
        <tissue>Macrophage</tissue>
    </source>
</reference>
<reference key="2">
    <citation type="journal article" date="2004" name="Genome Res.">
        <title>The status, quality, and expansion of the NIH full-length cDNA project: the Mammalian Gene Collection (MGC).</title>
        <authorList>
            <consortium name="The MGC Project Team"/>
        </authorList>
    </citation>
    <scope>NUCLEOTIDE SEQUENCE [LARGE SCALE MRNA]</scope>
    <source>
        <strain>C57BL/6J</strain>
        <tissue>Brain</tissue>
    </source>
</reference>
<reference key="3">
    <citation type="journal article" date="2010" name="Cell">
        <title>A tissue-specific atlas of mouse protein phosphorylation and expression.</title>
        <authorList>
            <person name="Huttlin E.L."/>
            <person name="Jedrychowski M.P."/>
            <person name="Elias J.E."/>
            <person name="Goswami T."/>
            <person name="Rad R."/>
            <person name="Beausoleil S.A."/>
            <person name="Villen J."/>
            <person name="Haas W."/>
            <person name="Sowa M.E."/>
            <person name="Gygi S.P."/>
        </authorList>
    </citation>
    <scope>PHOSPHORYLATION [LARGE SCALE ANALYSIS] AT THR-139</scope>
    <scope>IDENTIFICATION BY MASS SPECTROMETRY [LARGE SCALE ANALYSIS]</scope>
    <source>
        <tissue>Brain</tissue>
        <tissue>Kidney</tissue>
        <tissue>Liver</tissue>
        <tissue>Lung</tissue>
        <tissue>Pancreas</tissue>
        <tissue>Spleen</tissue>
        <tissue>Testis</tissue>
    </source>
</reference>
<reference key="4">
    <citation type="journal article" date="2013" name="Mol. Cell">
        <title>SIRT5-mediated lysine desuccinylation impacts diverse metabolic pathways.</title>
        <authorList>
            <person name="Park J."/>
            <person name="Chen Y."/>
            <person name="Tishkoff D.X."/>
            <person name="Peng C."/>
            <person name="Tan M."/>
            <person name="Dai L."/>
            <person name="Xie Z."/>
            <person name="Zhang Y."/>
            <person name="Zwaans B.M."/>
            <person name="Skinner M.E."/>
            <person name="Lombard D.B."/>
            <person name="Zhao Y."/>
        </authorList>
    </citation>
    <scope>IDENTIFICATION BY MASS SPECTROMETRY [LARGE SCALE ANALYSIS]</scope>
    <source>
        <tissue>Embryonic fibroblast</tissue>
    </source>
</reference>
<reference key="5">
    <citation type="journal article" date="2015" name="Mol. Cell. Biol.">
        <title>The DHX33 RNA Helicase Promotes mRNA Translation Initiation.</title>
        <authorList>
            <person name="Zhang Y."/>
            <person name="You J."/>
            <person name="Wang X."/>
            <person name="Weber J."/>
        </authorList>
    </citation>
    <scope>INTERACTION WITH DHX33</scope>
</reference>
<reference evidence="7 8" key="6">
    <citation type="journal article" date="2022" name="Nature">
        <title>A male germ-cell-specific ribosome controls male fertility.</title>
        <authorList>
            <person name="Li H."/>
            <person name="Huo Y."/>
            <person name="He X."/>
            <person name="Yao L."/>
            <person name="Zhang H."/>
            <person name="Cui Y."/>
            <person name="Xiao H."/>
            <person name="Xie W."/>
            <person name="Zhang D."/>
            <person name="Wang Y."/>
            <person name="Zhang S."/>
            <person name="Tu H."/>
            <person name="Cheng Y."/>
            <person name="Guo Y."/>
            <person name="Cao X."/>
            <person name="Zhu Y."/>
            <person name="Jiang T."/>
            <person name="Guo X."/>
            <person name="Qin Y."/>
            <person name="Sha J."/>
        </authorList>
    </citation>
    <scope>STRUCTURE BY ELECTRON MICROSCOPY (3.03 ANGSTROMS) OF RIBOSOME</scope>
    <scope>FUNCTION</scope>
    <scope>SUBUNIT</scope>
    <scope>SUBCELLULAR LOCATION</scope>
</reference>
<keyword id="KW-0002">3D-structure</keyword>
<keyword id="KW-0963">Cytoplasm</keyword>
<keyword id="KW-1017">Isopeptide bond</keyword>
<keyword id="KW-0597">Phosphoprotein</keyword>
<keyword id="KW-1185">Reference proteome</keyword>
<keyword id="KW-0687">Ribonucleoprotein</keyword>
<keyword id="KW-0689">Ribosomal protein</keyword>
<keyword id="KW-0832">Ubl conjugation</keyword>
<evidence type="ECO:0000250" key="1">
    <source>
        <dbReference type="UniProtKB" id="P61254"/>
    </source>
</evidence>
<evidence type="ECO:0000256" key="2">
    <source>
        <dbReference type="SAM" id="MobiDB-lite"/>
    </source>
</evidence>
<evidence type="ECO:0000269" key="3">
    <source>
    </source>
</evidence>
<evidence type="ECO:0000269" key="4">
    <source>
    </source>
</evidence>
<evidence type="ECO:0000269" key="5">
    <source>
    </source>
</evidence>
<evidence type="ECO:0000305" key="6"/>
<evidence type="ECO:0007744" key="7">
    <source>
        <dbReference type="PDB" id="7CPU"/>
    </source>
</evidence>
<evidence type="ECO:0007744" key="8">
    <source>
        <dbReference type="PDB" id="7CPV"/>
    </source>
</evidence>
<evidence type="ECO:0007744" key="9">
    <source>
    </source>
</evidence>
<dbReference type="EMBL" id="X80699">
    <property type="protein sequence ID" value="CAA56716.1"/>
    <property type="molecule type" value="mRNA"/>
</dbReference>
<dbReference type="EMBL" id="BC070397">
    <property type="protein sequence ID" value="AAH70397.1"/>
    <property type="molecule type" value="mRNA"/>
</dbReference>
<dbReference type="CCDS" id="CCDS36187.1"/>
<dbReference type="PIR" id="I48616">
    <property type="entry name" value="S48864"/>
</dbReference>
<dbReference type="RefSeq" id="NP_033106.1">
    <property type="nucleotide sequence ID" value="NM_009080.2"/>
</dbReference>
<dbReference type="PDB" id="6SWA">
    <property type="method" value="EM"/>
    <property type="resolution" value="3.10 A"/>
    <property type="chains" value="W=1-145"/>
</dbReference>
<dbReference type="PDB" id="7CPU">
    <property type="method" value="EM"/>
    <property type="resolution" value="2.82 A"/>
    <property type="chains" value="LY=1-145"/>
</dbReference>
<dbReference type="PDB" id="7CPV">
    <property type="method" value="EM"/>
    <property type="resolution" value="3.03 A"/>
    <property type="chains" value="LY=1-145"/>
</dbReference>
<dbReference type="PDB" id="7LS1">
    <property type="method" value="EM"/>
    <property type="resolution" value="3.30 A"/>
    <property type="chains" value="S2=1-145"/>
</dbReference>
<dbReference type="PDB" id="7LS2">
    <property type="method" value="EM"/>
    <property type="resolution" value="3.10 A"/>
    <property type="chains" value="S2=1-145"/>
</dbReference>
<dbReference type="PDBsum" id="6SWA"/>
<dbReference type="PDBsum" id="7CPU"/>
<dbReference type="PDBsum" id="7CPV"/>
<dbReference type="PDBsum" id="7LS1"/>
<dbReference type="PDBsum" id="7LS2"/>
<dbReference type="EMDB" id="EMD-23500"/>
<dbReference type="EMDB" id="EMD-23501"/>
<dbReference type="EMDB" id="EMD-30432"/>
<dbReference type="EMDB" id="EMD-30433"/>
<dbReference type="SMR" id="P61255"/>
<dbReference type="BioGRID" id="202973">
    <property type="interactions" value="102"/>
</dbReference>
<dbReference type="ComplexPortal" id="CPX-5262">
    <property type="entry name" value="60S cytosolic large ribosomal subunit"/>
</dbReference>
<dbReference type="ComplexPortal" id="CPX-7662">
    <property type="entry name" value="60S cytosolic large ribosomal subunit, testis-specific variant"/>
</dbReference>
<dbReference type="ComplexPortal" id="CPX-7663">
    <property type="entry name" value="60S cytosolic large ribosomal subunit, striated muscle variant"/>
</dbReference>
<dbReference type="CORUM" id="P61255"/>
<dbReference type="FunCoup" id="P61255">
    <property type="interactions" value="2211"/>
</dbReference>
<dbReference type="IntAct" id="P61255">
    <property type="interactions" value="1"/>
</dbReference>
<dbReference type="MINT" id="P61255"/>
<dbReference type="STRING" id="10090.ENSMUSP00000129072"/>
<dbReference type="GlyGen" id="P61255">
    <property type="glycosylation" value="1 site, 1 O-linked glycan (1 site)"/>
</dbReference>
<dbReference type="iPTMnet" id="P61255"/>
<dbReference type="MetOSite" id="P61255"/>
<dbReference type="PhosphoSitePlus" id="P61255"/>
<dbReference type="SwissPalm" id="P61255"/>
<dbReference type="jPOST" id="P61255"/>
<dbReference type="PaxDb" id="10090-ENSMUSP00000073175"/>
<dbReference type="PeptideAtlas" id="P61255"/>
<dbReference type="ProteomicsDB" id="299856"/>
<dbReference type="Pumba" id="P61255"/>
<dbReference type="TopDownProteomics" id="P61255"/>
<dbReference type="Antibodypedia" id="24664">
    <property type="antibodies" value="173 antibodies from 24 providers"/>
</dbReference>
<dbReference type="DNASU" id="19941"/>
<dbReference type="Ensembl" id="ENSMUST00000073471.13">
    <property type="protein sequence ID" value="ENSMUSP00000073175.7"/>
    <property type="gene ID" value="ENSMUSG00000060938.15"/>
</dbReference>
<dbReference type="Ensembl" id="ENSMUST00000167436.3">
    <property type="protein sequence ID" value="ENSMUSP00000129072.2"/>
    <property type="gene ID" value="ENSMUSG00000060938.15"/>
</dbReference>
<dbReference type="GeneID" id="19941"/>
<dbReference type="KEGG" id="mmu:19941"/>
<dbReference type="UCSC" id="uc007joh.1">
    <property type="organism name" value="mouse"/>
</dbReference>
<dbReference type="AGR" id="MGI:106022"/>
<dbReference type="CTD" id="6154"/>
<dbReference type="MGI" id="MGI:106022">
    <property type="gene designation" value="Rpl26"/>
</dbReference>
<dbReference type="VEuPathDB" id="HostDB:ENSMUSG00000060938"/>
<dbReference type="eggNOG" id="KOG3401">
    <property type="taxonomic scope" value="Eukaryota"/>
</dbReference>
<dbReference type="GeneTree" id="ENSGT00390000014165"/>
<dbReference type="HOGENOM" id="CLU_093240_0_0_1"/>
<dbReference type="InParanoid" id="P61255"/>
<dbReference type="OMA" id="VRIMRGD"/>
<dbReference type="OrthoDB" id="1688503at2759"/>
<dbReference type="PhylomeDB" id="P61255"/>
<dbReference type="TreeFam" id="TF300236"/>
<dbReference type="Reactome" id="R-MMU-156827">
    <property type="pathway name" value="L13a-mediated translational silencing of Ceruloplasmin expression"/>
</dbReference>
<dbReference type="Reactome" id="R-MMU-1799339">
    <property type="pathway name" value="SRP-dependent cotranslational protein targeting to membrane"/>
</dbReference>
<dbReference type="Reactome" id="R-MMU-6791226">
    <property type="pathway name" value="Major pathway of rRNA processing in the nucleolus and cytosol"/>
</dbReference>
<dbReference type="Reactome" id="R-MMU-72689">
    <property type="pathway name" value="Formation of a pool of free 40S subunits"/>
</dbReference>
<dbReference type="Reactome" id="R-MMU-72706">
    <property type="pathway name" value="GTP hydrolysis and joining of the 60S ribosomal subunit"/>
</dbReference>
<dbReference type="Reactome" id="R-MMU-975956">
    <property type="pathway name" value="Nonsense Mediated Decay (NMD) independent of the Exon Junction Complex (EJC)"/>
</dbReference>
<dbReference type="Reactome" id="R-MMU-975957">
    <property type="pathway name" value="Nonsense Mediated Decay (NMD) enhanced by the Exon Junction Complex (EJC)"/>
</dbReference>
<dbReference type="BioGRID-ORCS" id="19941">
    <property type="hits" value="24 hits in 59 CRISPR screens"/>
</dbReference>
<dbReference type="CD-CODE" id="CE726F99">
    <property type="entry name" value="Postsynaptic density"/>
</dbReference>
<dbReference type="ChiTaRS" id="Rpl26">
    <property type="organism name" value="mouse"/>
</dbReference>
<dbReference type="PRO" id="PR:P61255"/>
<dbReference type="Proteomes" id="UP000000589">
    <property type="component" value="Chromosome 11"/>
</dbReference>
<dbReference type="RNAct" id="P61255">
    <property type="molecule type" value="protein"/>
</dbReference>
<dbReference type="Bgee" id="ENSMUSG00000060938">
    <property type="expression patterns" value="Expressed in medial ganglionic eminence and 248 other cell types or tissues"/>
</dbReference>
<dbReference type="ExpressionAtlas" id="P61255">
    <property type="expression patterns" value="baseline and differential"/>
</dbReference>
<dbReference type="GO" id="GO:0005737">
    <property type="term" value="C:cytoplasm"/>
    <property type="evidence" value="ECO:0000314"/>
    <property type="project" value="ComplexPortal"/>
</dbReference>
<dbReference type="GO" id="GO:0005829">
    <property type="term" value="C:cytosol"/>
    <property type="evidence" value="ECO:0000304"/>
    <property type="project" value="Reactome"/>
</dbReference>
<dbReference type="GO" id="GO:0022625">
    <property type="term" value="C:cytosolic large ribosomal subunit"/>
    <property type="evidence" value="ECO:0000314"/>
    <property type="project" value="UniProtKB"/>
</dbReference>
<dbReference type="GO" id="GO:0098794">
    <property type="term" value="C:postsynapse"/>
    <property type="evidence" value="ECO:0000303"/>
    <property type="project" value="SynGO"/>
</dbReference>
<dbReference type="GO" id="GO:0098793">
    <property type="term" value="C:presynapse"/>
    <property type="evidence" value="ECO:0000303"/>
    <property type="project" value="SynGO"/>
</dbReference>
<dbReference type="GO" id="GO:0005840">
    <property type="term" value="C:ribosome"/>
    <property type="evidence" value="ECO:0000303"/>
    <property type="project" value="SynGO"/>
</dbReference>
<dbReference type="GO" id="GO:0045202">
    <property type="term" value="C:synapse"/>
    <property type="evidence" value="ECO:0000314"/>
    <property type="project" value="SynGO"/>
</dbReference>
<dbReference type="GO" id="GO:0003723">
    <property type="term" value="F:RNA binding"/>
    <property type="evidence" value="ECO:0007669"/>
    <property type="project" value="InterPro"/>
</dbReference>
<dbReference type="GO" id="GO:0003735">
    <property type="term" value="F:structural constituent of ribosome"/>
    <property type="evidence" value="ECO:0000314"/>
    <property type="project" value="UniProtKB"/>
</dbReference>
<dbReference type="GO" id="GO:0071479">
    <property type="term" value="P:cellular response to ionizing radiation"/>
    <property type="evidence" value="ECO:0000315"/>
    <property type="project" value="CAFA"/>
</dbReference>
<dbReference type="GO" id="GO:0002181">
    <property type="term" value="P:cytoplasmic translation"/>
    <property type="evidence" value="ECO:0000303"/>
    <property type="project" value="ComplexPortal"/>
</dbReference>
<dbReference type="GO" id="GO:0030330">
    <property type="term" value="P:DNA damage response, signal transduction by p53 class mediator"/>
    <property type="evidence" value="ECO:0000314"/>
    <property type="project" value="CAFA"/>
</dbReference>
<dbReference type="GO" id="GO:1902167">
    <property type="term" value="P:positive regulation of intrinsic apoptotic signaling pathway in response to DNA damage by p53 class mediator"/>
    <property type="evidence" value="ECO:0000315"/>
    <property type="project" value="CAFA"/>
</dbReference>
<dbReference type="GO" id="GO:0140242">
    <property type="term" value="P:translation at postsynapse"/>
    <property type="evidence" value="ECO:0000303"/>
    <property type="project" value="SynGO"/>
</dbReference>
<dbReference type="GO" id="GO:0140236">
    <property type="term" value="P:translation at presynapse"/>
    <property type="evidence" value="ECO:0000303"/>
    <property type="project" value="SynGO"/>
</dbReference>
<dbReference type="CDD" id="cd06089">
    <property type="entry name" value="KOW_RPL26"/>
    <property type="match status" value="1"/>
</dbReference>
<dbReference type="FunFam" id="2.30.30.30:FF:000009">
    <property type="entry name" value="60S ribosomal protein L26"/>
    <property type="match status" value="1"/>
</dbReference>
<dbReference type="Gene3D" id="2.30.30.30">
    <property type="match status" value="1"/>
</dbReference>
<dbReference type="HAMAP" id="MF_01326_A">
    <property type="entry name" value="Ribosomal_uL24_A"/>
    <property type="match status" value="1"/>
</dbReference>
<dbReference type="InterPro" id="IPR005824">
    <property type="entry name" value="KOW"/>
</dbReference>
<dbReference type="InterPro" id="IPR014722">
    <property type="entry name" value="Rib_uL2_dom2"/>
</dbReference>
<dbReference type="InterPro" id="IPR005825">
    <property type="entry name" value="Ribosomal_uL24_CS"/>
</dbReference>
<dbReference type="InterPro" id="IPR005756">
    <property type="entry name" value="Ribosomal_uL24_euk/arc"/>
</dbReference>
<dbReference type="InterPro" id="IPR041988">
    <property type="entry name" value="Ribosomal_uL24_KOW"/>
</dbReference>
<dbReference type="InterPro" id="IPR008991">
    <property type="entry name" value="Translation_prot_SH3-like_sf"/>
</dbReference>
<dbReference type="NCBIfam" id="TIGR01080">
    <property type="entry name" value="rplX_A_E"/>
    <property type="match status" value="1"/>
</dbReference>
<dbReference type="PANTHER" id="PTHR11143">
    <property type="entry name" value="60S RIBOSOMAL PROTEIN L26 FAMILY MEMBER"/>
    <property type="match status" value="1"/>
</dbReference>
<dbReference type="Pfam" id="PF00467">
    <property type="entry name" value="KOW"/>
    <property type="match status" value="1"/>
</dbReference>
<dbReference type="Pfam" id="PF16906">
    <property type="entry name" value="Ribosomal_L26"/>
    <property type="match status" value="1"/>
</dbReference>
<dbReference type="SMART" id="SM00739">
    <property type="entry name" value="KOW"/>
    <property type="match status" value="1"/>
</dbReference>
<dbReference type="SUPFAM" id="SSF50104">
    <property type="entry name" value="Translation proteins SH3-like domain"/>
    <property type="match status" value="1"/>
</dbReference>
<dbReference type="PROSITE" id="PS01108">
    <property type="entry name" value="RIBOSOMAL_L24"/>
    <property type="match status" value="1"/>
</dbReference>
<proteinExistence type="evidence at protein level"/>
<comment type="function">
    <text evidence="3 4">Component of the large ribosomal subunit (PubMed:26100019, PubMed:36517592). The ribosome is a large ribonucleoprotein complex responsible for the synthesis of proteins in the cell (PubMed:26100019, PubMed:36517592).</text>
</comment>
<comment type="subunit">
    <text evidence="3 4">Component of the large ribosomal subunit (PubMed:36517592). Interacts with DHX33 (PubMed:26100019).</text>
</comment>
<comment type="subcellular location">
    <subcellularLocation>
        <location evidence="4">Cytoplasm</location>
    </subcellularLocation>
</comment>
<comment type="induction">
    <text evidence="5">Up-regulated in silica-treated macrophages.</text>
</comment>
<comment type="PTM">
    <text evidence="1">Ufmylated by UFL1 in response to endoplasmic reticulum stress, promoting reticulophagy of endoplasmic reticulum sheets.</text>
</comment>
<comment type="similarity">
    <text evidence="6">Belongs to the universal ribosomal protein uL24 family.</text>
</comment>
<sequence>MKFNPFVTSDRSKNRKRHFNAPSHIRRKIMSSPLSKELRQKYNVRSMPIRKDDEVQVVRGHYKGQQIGKVVQVYRKKYVIYIERVQREKANGTTVHVGIHPSKVVITRLKLDKDRKKILERKAKSRQVGKEKGKYKEETIEKMQE</sequence>
<gene>
    <name type="primary">Rpl26</name>
</gene>
<name>RL26_MOUSE</name>
<organism>
    <name type="scientific">Mus musculus</name>
    <name type="common">Mouse</name>
    <dbReference type="NCBI Taxonomy" id="10090"/>
    <lineage>
        <taxon>Eukaryota</taxon>
        <taxon>Metazoa</taxon>
        <taxon>Chordata</taxon>
        <taxon>Craniata</taxon>
        <taxon>Vertebrata</taxon>
        <taxon>Euteleostomi</taxon>
        <taxon>Mammalia</taxon>
        <taxon>Eutheria</taxon>
        <taxon>Euarchontoglires</taxon>
        <taxon>Glires</taxon>
        <taxon>Rodentia</taxon>
        <taxon>Myomorpha</taxon>
        <taxon>Muroidea</taxon>
        <taxon>Muridae</taxon>
        <taxon>Murinae</taxon>
        <taxon>Mus</taxon>
        <taxon>Mus</taxon>
    </lineage>
</organism>